<gene>
    <name evidence="1" type="primary">zupT</name>
    <name type="ordered locus">CPE0721</name>
</gene>
<dbReference type="EMBL" id="BA000016">
    <property type="protein sequence ID" value="BAB80427.1"/>
    <property type="molecule type" value="Genomic_DNA"/>
</dbReference>
<dbReference type="SMR" id="Q8XMG8"/>
<dbReference type="STRING" id="195102.gene:10489983"/>
<dbReference type="KEGG" id="cpe:CPE0721"/>
<dbReference type="HOGENOM" id="CLU_015114_1_3_9"/>
<dbReference type="Proteomes" id="UP000000818">
    <property type="component" value="Chromosome"/>
</dbReference>
<dbReference type="GO" id="GO:0005886">
    <property type="term" value="C:plasma membrane"/>
    <property type="evidence" value="ECO:0007669"/>
    <property type="project" value="UniProtKB-SubCell"/>
</dbReference>
<dbReference type="GO" id="GO:0046872">
    <property type="term" value="F:metal ion binding"/>
    <property type="evidence" value="ECO:0007669"/>
    <property type="project" value="UniProtKB-KW"/>
</dbReference>
<dbReference type="GO" id="GO:0005385">
    <property type="term" value="F:zinc ion transmembrane transporter activity"/>
    <property type="evidence" value="ECO:0007669"/>
    <property type="project" value="UniProtKB-UniRule"/>
</dbReference>
<dbReference type="HAMAP" id="MF_00548">
    <property type="entry name" value="ZupT"/>
    <property type="match status" value="1"/>
</dbReference>
<dbReference type="InterPro" id="IPR003689">
    <property type="entry name" value="ZIP"/>
</dbReference>
<dbReference type="InterPro" id="IPR023498">
    <property type="entry name" value="Zn_transptr_ZupT"/>
</dbReference>
<dbReference type="NCBIfam" id="NF003243">
    <property type="entry name" value="PRK04201.1"/>
    <property type="match status" value="1"/>
</dbReference>
<dbReference type="PANTHER" id="PTHR11040:SF205">
    <property type="entry name" value="ZINC TRANSPORTER ZUPT"/>
    <property type="match status" value="1"/>
</dbReference>
<dbReference type="PANTHER" id="PTHR11040">
    <property type="entry name" value="ZINC/IRON TRANSPORTER"/>
    <property type="match status" value="1"/>
</dbReference>
<dbReference type="Pfam" id="PF02535">
    <property type="entry name" value="Zip"/>
    <property type="match status" value="1"/>
</dbReference>
<evidence type="ECO:0000255" key="1">
    <source>
        <dbReference type="HAMAP-Rule" id="MF_00548"/>
    </source>
</evidence>
<evidence type="ECO:0000305" key="2"/>
<protein>
    <recommendedName>
        <fullName evidence="1">Zinc transporter ZupT</fullName>
    </recommendedName>
</protein>
<reference key="1">
    <citation type="journal article" date="2002" name="Proc. Natl. Acad. Sci. U.S.A.">
        <title>Complete genome sequence of Clostridium perfringens, an anaerobic flesh-eater.</title>
        <authorList>
            <person name="Shimizu T."/>
            <person name="Ohtani K."/>
            <person name="Hirakawa H."/>
            <person name="Ohshima K."/>
            <person name="Yamashita A."/>
            <person name="Shiba T."/>
            <person name="Ogasawara N."/>
            <person name="Hattori M."/>
            <person name="Kuhara S."/>
            <person name="Hayashi H."/>
        </authorList>
    </citation>
    <scope>NUCLEOTIDE SEQUENCE [LARGE SCALE GENOMIC DNA]</scope>
    <source>
        <strain>13 / Type A</strain>
    </source>
</reference>
<proteinExistence type="inferred from homology"/>
<keyword id="KW-1003">Cell membrane</keyword>
<keyword id="KW-0406">Ion transport</keyword>
<keyword id="KW-0408">Iron</keyword>
<keyword id="KW-0472">Membrane</keyword>
<keyword id="KW-0479">Metal-binding</keyword>
<keyword id="KW-1185">Reference proteome</keyword>
<keyword id="KW-0812">Transmembrane</keyword>
<keyword id="KW-1133">Transmembrane helix</keyword>
<keyword id="KW-0813">Transport</keyword>
<keyword id="KW-0862">Zinc</keyword>
<keyword id="KW-0864">Zinc transport</keyword>
<name>ZUPT_CLOPE</name>
<comment type="function">
    <text evidence="1">Mediates zinc uptake. May also transport other divalent cations.</text>
</comment>
<comment type="catalytic activity">
    <reaction evidence="1">
        <text>Zn(2+)(in) = Zn(2+)(out)</text>
        <dbReference type="Rhea" id="RHEA:29351"/>
        <dbReference type="ChEBI" id="CHEBI:29105"/>
    </reaction>
</comment>
<comment type="subcellular location">
    <subcellularLocation>
        <location evidence="1 2">Cell membrane</location>
        <topology evidence="1 2">Multi-pass membrane protein</topology>
    </subcellularLocation>
</comment>
<comment type="similarity">
    <text evidence="1 2">Belongs to the ZIP transporter (TC 2.A.5) family. ZupT subfamily.</text>
</comment>
<accession>Q8XMG8</accession>
<organism>
    <name type="scientific">Clostridium perfringens (strain 13 / Type A)</name>
    <dbReference type="NCBI Taxonomy" id="195102"/>
    <lineage>
        <taxon>Bacteria</taxon>
        <taxon>Bacillati</taxon>
        <taxon>Bacillota</taxon>
        <taxon>Clostridia</taxon>
        <taxon>Eubacteriales</taxon>
        <taxon>Clostridiaceae</taxon>
        <taxon>Clostridium</taxon>
    </lineage>
</organism>
<feature type="chain" id="PRO_0000207268" description="Zinc transporter ZupT">
    <location>
        <begin position="1"/>
        <end position="285"/>
    </location>
</feature>
<feature type="transmembrane region" description="Helical" evidence="1">
    <location>
        <begin position="13"/>
        <end position="33"/>
    </location>
</feature>
<feature type="transmembrane region" description="Helical" evidence="1">
    <location>
        <begin position="41"/>
        <end position="61"/>
    </location>
</feature>
<feature type="transmembrane region" description="Helical" evidence="1">
    <location>
        <begin position="80"/>
        <end position="100"/>
    </location>
</feature>
<feature type="transmembrane region" description="Helical" evidence="1">
    <location>
        <begin position="160"/>
        <end position="180"/>
    </location>
</feature>
<feature type="transmembrane region" description="Helical" evidence="1">
    <location>
        <begin position="204"/>
        <end position="224"/>
    </location>
</feature>
<feature type="transmembrane region" description="Helical" evidence="1">
    <location>
        <begin position="228"/>
        <end position="248"/>
    </location>
</feature>
<feature type="transmembrane region" description="Helical" evidence="1">
    <location>
        <begin position="265"/>
        <end position="285"/>
    </location>
</feature>
<feature type="binding site" description="M2 metal binding site" evidence="1">
    <location>
        <position position="153"/>
    </location>
    <ligand>
        <name>Fe(2+)</name>
        <dbReference type="ChEBI" id="CHEBI:29033"/>
    </ligand>
</feature>
<feature type="binding site" description="M2 metal binding site" evidence="1">
    <location>
        <position position="156"/>
    </location>
    <ligand>
        <name>Fe(2+)</name>
        <dbReference type="ChEBI" id="CHEBI:29033"/>
    </ligand>
</feature>
<feature type="binding site" description="M1 metal binding site" evidence="1">
    <location>
        <position position="156"/>
    </location>
    <ligand>
        <name>Zn(2+)</name>
        <dbReference type="ChEBI" id="CHEBI:29105"/>
    </ligand>
</feature>
<feature type="binding site" description="M1 metal binding site" evidence="1">
    <location>
        <position position="181"/>
    </location>
    <ligand>
        <name>Zn(2+)</name>
        <dbReference type="ChEBI" id="CHEBI:29105"/>
    </ligand>
</feature>
<feature type="binding site" description="M2 metal binding site" evidence="1">
    <location>
        <position position="182"/>
    </location>
    <ligand>
        <name>Fe(2+)</name>
        <dbReference type="ChEBI" id="CHEBI:29033"/>
    </ligand>
</feature>
<feature type="binding site" description="M2 metal binding site" evidence="1">
    <location>
        <position position="185"/>
    </location>
    <ligand>
        <name>Fe(2+)</name>
        <dbReference type="ChEBI" id="CHEBI:29033"/>
    </ligand>
</feature>
<feature type="binding site" description="M1 metal binding site" evidence="1">
    <location>
        <position position="185"/>
    </location>
    <ligand>
        <name>Zn(2+)</name>
        <dbReference type="ChEBI" id="CHEBI:29105"/>
    </ligand>
</feature>
<feature type="binding site" description="M2 metal binding site" evidence="1">
    <location>
        <position position="214"/>
    </location>
    <ligand>
        <name>Fe(2+)</name>
        <dbReference type="ChEBI" id="CHEBI:29033"/>
    </ligand>
</feature>
<sequence>MKGGDNMNNVLMAFLLTLLAGLATGIGSCIAFFAKKTNKKFLCVSLGFSAGVMIYVSMIEMFQTAKESLVGVMGIKAGNWITVISFFAGIAIIALIDKFVPEEENPHEVRSVEEVENEIEEYKGENKEGKADIKDKTLMRTGIVTALAIAIHNFPEGLATFVSALEGASLAIPITIAIAIHNIPEGISVSVPIFYATGDKKKAFLYSFLSGMSEPIGAIIGYTLLRNIFNDITLGILLSAVAGIMVFISLDELLPTARKYGEHHLAIYGLIAGMVVMAVSLLLFI</sequence>